<feature type="chain" id="PRO_0000194985" description="Ubiquitin recognition factor in ER-associated degradation protein 1">
    <location>
        <begin position="1"/>
        <end position="307"/>
    </location>
</feature>
<feature type="region of interest" description="Disordered" evidence="3">
    <location>
        <begin position="230"/>
        <end position="255"/>
    </location>
</feature>
<feature type="region of interest" description="Disordered" evidence="3">
    <location>
        <begin position="288"/>
        <end position="307"/>
    </location>
</feature>
<feature type="modified residue" description="N-acetylmethionine" evidence="1">
    <location>
        <position position="1"/>
    </location>
</feature>
<feature type="modified residue" description="Phosphoserine" evidence="1">
    <location>
        <position position="129"/>
    </location>
</feature>
<feature type="modified residue" description="Phosphoserine" evidence="1">
    <location>
        <position position="231"/>
    </location>
</feature>
<feature type="modified residue" description="Phosphoserine" evidence="1">
    <location>
        <position position="245"/>
    </location>
</feature>
<feature type="modified residue" description="Phosphoserine" evidence="8">
    <location>
        <position position="247"/>
    </location>
</feature>
<feature type="modified residue" description="Phosphoserine" evidence="7 8">
    <location>
        <position position="299"/>
    </location>
</feature>
<feature type="sequence conflict" description="In Ref. 1; AAD08719." evidence="5" ref="1">
    <original>L</original>
    <variation>M</variation>
    <location>
        <position position="152"/>
    </location>
</feature>
<feature type="sequence conflict" description="In Ref. 1; AAD08719." evidence="5" ref="1">
    <original>E</original>
    <variation>K</variation>
    <location>
        <position position="201"/>
    </location>
</feature>
<feature type="sequence conflict" description="In Ref. 1; AAD08719." evidence="5" ref="1">
    <original>I</original>
    <variation>V</variation>
    <location>
        <position position="291"/>
    </location>
</feature>
<reference key="1">
    <citation type="journal article" date="1997" name="Hum. Mol. Genet.">
        <title>UFD1L, a developmentally expressed ubiquitination gene, is deleted in CATCH 22 syndrome.</title>
        <authorList>
            <person name="Pizzuti A."/>
            <person name="Novelli G."/>
            <person name="Ratti A."/>
            <person name="Amati F."/>
            <person name="Mari A."/>
            <person name="Calabrese G."/>
            <person name="Nicolis S."/>
            <person name="Silani V."/>
            <person name="Marino B."/>
            <person name="Scarlato G."/>
            <person name="Ottolenghi S."/>
            <person name="Dallapiccola B."/>
        </authorList>
    </citation>
    <scope>NUCLEOTIDE SEQUENCE [MRNA]</scope>
    <source>
        <tissue>Brain</tissue>
    </source>
</reference>
<reference key="2">
    <citation type="journal article" date="2005" name="Science">
        <title>The transcriptional landscape of the mammalian genome.</title>
        <authorList>
            <person name="Carninci P."/>
            <person name="Kasukawa T."/>
            <person name="Katayama S."/>
            <person name="Gough J."/>
            <person name="Frith M.C."/>
            <person name="Maeda N."/>
            <person name="Oyama R."/>
            <person name="Ravasi T."/>
            <person name="Lenhard B."/>
            <person name="Wells C."/>
            <person name="Kodzius R."/>
            <person name="Shimokawa K."/>
            <person name="Bajic V.B."/>
            <person name="Brenner S.E."/>
            <person name="Batalov S."/>
            <person name="Forrest A.R."/>
            <person name="Zavolan M."/>
            <person name="Davis M.J."/>
            <person name="Wilming L.G."/>
            <person name="Aidinis V."/>
            <person name="Allen J.E."/>
            <person name="Ambesi-Impiombato A."/>
            <person name="Apweiler R."/>
            <person name="Aturaliya R.N."/>
            <person name="Bailey T.L."/>
            <person name="Bansal M."/>
            <person name="Baxter L."/>
            <person name="Beisel K.W."/>
            <person name="Bersano T."/>
            <person name="Bono H."/>
            <person name="Chalk A.M."/>
            <person name="Chiu K.P."/>
            <person name="Choudhary V."/>
            <person name="Christoffels A."/>
            <person name="Clutterbuck D.R."/>
            <person name="Crowe M.L."/>
            <person name="Dalla E."/>
            <person name="Dalrymple B.P."/>
            <person name="de Bono B."/>
            <person name="Della Gatta G."/>
            <person name="di Bernardo D."/>
            <person name="Down T."/>
            <person name="Engstrom P."/>
            <person name="Fagiolini M."/>
            <person name="Faulkner G."/>
            <person name="Fletcher C.F."/>
            <person name="Fukushima T."/>
            <person name="Furuno M."/>
            <person name="Futaki S."/>
            <person name="Gariboldi M."/>
            <person name="Georgii-Hemming P."/>
            <person name="Gingeras T.R."/>
            <person name="Gojobori T."/>
            <person name="Green R.E."/>
            <person name="Gustincich S."/>
            <person name="Harbers M."/>
            <person name="Hayashi Y."/>
            <person name="Hensch T.K."/>
            <person name="Hirokawa N."/>
            <person name="Hill D."/>
            <person name="Huminiecki L."/>
            <person name="Iacono M."/>
            <person name="Ikeo K."/>
            <person name="Iwama A."/>
            <person name="Ishikawa T."/>
            <person name="Jakt M."/>
            <person name="Kanapin A."/>
            <person name="Katoh M."/>
            <person name="Kawasawa Y."/>
            <person name="Kelso J."/>
            <person name="Kitamura H."/>
            <person name="Kitano H."/>
            <person name="Kollias G."/>
            <person name="Krishnan S.P."/>
            <person name="Kruger A."/>
            <person name="Kummerfeld S.K."/>
            <person name="Kurochkin I.V."/>
            <person name="Lareau L.F."/>
            <person name="Lazarevic D."/>
            <person name="Lipovich L."/>
            <person name="Liu J."/>
            <person name="Liuni S."/>
            <person name="McWilliam S."/>
            <person name="Madan Babu M."/>
            <person name="Madera M."/>
            <person name="Marchionni L."/>
            <person name="Matsuda H."/>
            <person name="Matsuzawa S."/>
            <person name="Miki H."/>
            <person name="Mignone F."/>
            <person name="Miyake S."/>
            <person name="Morris K."/>
            <person name="Mottagui-Tabar S."/>
            <person name="Mulder N."/>
            <person name="Nakano N."/>
            <person name="Nakauchi H."/>
            <person name="Ng P."/>
            <person name="Nilsson R."/>
            <person name="Nishiguchi S."/>
            <person name="Nishikawa S."/>
            <person name="Nori F."/>
            <person name="Ohara O."/>
            <person name="Okazaki Y."/>
            <person name="Orlando V."/>
            <person name="Pang K.C."/>
            <person name="Pavan W.J."/>
            <person name="Pavesi G."/>
            <person name="Pesole G."/>
            <person name="Petrovsky N."/>
            <person name="Piazza S."/>
            <person name="Reed J."/>
            <person name="Reid J.F."/>
            <person name="Ring B.Z."/>
            <person name="Ringwald M."/>
            <person name="Rost B."/>
            <person name="Ruan Y."/>
            <person name="Salzberg S.L."/>
            <person name="Sandelin A."/>
            <person name="Schneider C."/>
            <person name="Schoenbach C."/>
            <person name="Sekiguchi K."/>
            <person name="Semple C.A."/>
            <person name="Seno S."/>
            <person name="Sessa L."/>
            <person name="Sheng Y."/>
            <person name="Shibata Y."/>
            <person name="Shimada H."/>
            <person name="Shimada K."/>
            <person name="Silva D."/>
            <person name="Sinclair B."/>
            <person name="Sperling S."/>
            <person name="Stupka E."/>
            <person name="Sugiura K."/>
            <person name="Sultana R."/>
            <person name="Takenaka Y."/>
            <person name="Taki K."/>
            <person name="Tammoja K."/>
            <person name="Tan S.L."/>
            <person name="Tang S."/>
            <person name="Taylor M.S."/>
            <person name="Tegner J."/>
            <person name="Teichmann S.A."/>
            <person name="Ueda H.R."/>
            <person name="van Nimwegen E."/>
            <person name="Verardo R."/>
            <person name="Wei C.L."/>
            <person name="Yagi K."/>
            <person name="Yamanishi H."/>
            <person name="Zabarovsky E."/>
            <person name="Zhu S."/>
            <person name="Zimmer A."/>
            <person name="Hide W."/>
            <person name="Bult C."/>
            <person name="Grimmond S.M."/>
            <person name="Teasdale R.D."/>
            <person name="Liu E.T."/>
            <person name="Brusic V."/>
            <person name="Quackenbush J."/>
            <person name="Wahlestedt C."/>
            <person name="Mattick J.S."/>
            <person name="Hume D.A."/>
            <person name="Kai C."/>
            <person name="Sasaki D."/>
            <person name="Tomaru Y."/>
            <person name="Fukuda S."/>
            <person name="Kanamori-Katayama M."/>
            <person name="Suzuki M."/>
            <person name="Aoki J."/>
            <person name="Arakawa T."/>
            <person name="Iida J."/>
            <person name="Imamura K."/>
            <person name="Itoh M."/>
            <person name="Kato T."/>
            <person name="Kawaji H."/>
            <person name="Kawagashira N."/>
            <person name="Kawashima T."/>
            <person name="Kojima M."/>
            <person name="Kondo S."/>
            <person name="Konno H."/>
            <person name="Nakano K."/>
            <person name="Ninomiya N."/>
            <person name="Nishio T."/>
            <person name="Okada M."/>
            <person name="Plessy C."/>
            <person name="Shibata K."/>
            <person name="Shiraki T."/>
            <person name="Suzuki S."/>
            <person name="Tagami M."/>
            <person name="Waki K."/>
            <person name="Watahiki A."/>
            <person name="Okamura-Oho Y."/>
            <person name="Suzuki H."/>
            <person name="Kawai J."/>
            <person name="Hayashizaki Y."/>
        </authorList>
    </citation>
    <scope>NUCLEOTIDE SEQUENCE [LARGE SCALE MRNA]</scope>
    <source>
        <strain>C57BL/6J</strain>
        <tissue>Kidney</tissue>
        <tissue>Stomach</tissue>
    </source>
</reference>
<reference key="3">
    <citation type="submission" date="2005-07" db="EMBL/GenBank/DDBJ databases">
        <authorList>
            <person name="Mural R.J."/>
            <person name="Adams M.D."/>
            <person name="Myers E.W."/>
            <person name="Smith H.O."/>
            <person name="Venter J.C."/>
        </authorList>
    </citation>
    <scope>NUCLEOTIDE SEQUENCE [LARGE SCALE GENOMIC DNA]</scope>
</reference>
<reference key="4">
    <citation type="journal article" date="2004" name="Genome Res.">
        <title>The status, quality, and expansion of the NIH full-length cDNA project: the Mammalian Gene Collection (MGC).</title>
        <authorList>
            <consortium name="The MGC Project Team"/>
        </authorList>
    </citation>
    <scope>NUCLEOTIDE SEQUENCE [LARGE SCALE MRNA]</scope>
    <source>
        <strain>FVB/N</strain>
        <tissue>Mammary tumor</tissue>
    </source>
</reference>
<reference key="5">
    <citation type="journal article" date="2007" name="Proc. Natl. Acad. Sci. U.S.A.">
        <title>Large-scale phosphorylation analysis of mouse liver.</title>
        <authorList>
            <person name="Villen J."/>
            <person name="Beausoleil S.A."/>
            <person name="Gerber S.A."/>
            <person name="Gygi S.P."/>
        </authorList>
    </citation>
    <scope>PHOSPHORYLATION [LARGE SCALE ANALYSIS] AT SER-299</scope>
    <scope>IDENTIFICATION BY MASS SPECTROMETRY [LARGE SCALE ANALYSIS]</scope>
    <source>
        <tissue>Liver</tissue>
    </source>
</reference>
<reference key="6">
    <citation type="journal article" date="2010" name="Cell">
        <title>A tissue-specific atlas of mouse protein phosphorylation and expression.</title>
        <authorList>
            <person name="Huttlin E.L."/>
            <person name="Jedrychowski M.P."/>
            <person name="Elias J.E."/>
            <person name="Goswami T."/>
            <person name="Rad R."/>
            <person name="Beausoleil S.A."/>
            <person name="Villen J."/>
            <person name="Haas W."/>
            <person name="Sowa M.E."/>
            <person name="Gygi S.P."/>
        </authorList>
    </citation>
    <scope>PHOSPHORYLATION [LARGE SCALE ANALYSIS] AT SER-247 AND SER-299</scope>
    <scope>IDENTIFICATION BY MASS SPECTROMETRY [LARGE SCALE ANALYSIS]</scope>
    <source>
        <tissue>Brain</tissue>
        <tissue>Brown adipose tissue</tissue>
        <tissue>Heart</tissue>
        <tissue>Kidney</tissue>
        <tissue>Liver</tissue>
        <tissue>Lung</tissue>
        <tissue>Pancreas</tissue>
        <tissue>Spleen</tissue>
        <tissue>Testis</tissue>
    </source>
</reference>
<reference key="7">
    <citation type="journal article" date="2014" name="Biochem. J.">
        <title>Signal-peptide-mediated translocation is regulated by a p97-AIRAPL complex.</title>
        <authorList>
            <person name="Glinka T."/>
            <person name="Alter J."/>
            <person name="Braunstein I."/>
            <person name="Tzach L."/>
            <person name="Wei Sheng C."/>
            <person name="Geifman S."/>
            <person name="Edelmann M.J."/>
            <person name="Kessler B.M."/>
            <person name="Stanhill A."/>
        </authorList>
    </citation>
    <scope>INTERACTION WITH ZFAND2B</scope>
</reference>
<dbReference type="EMBL" id="U64445">
    <property type="protein sequence ID" value="AAD08719.1"/>
    <property type="molecule type" value="mRNA"/>
</dbReference>
<dbReference type="EMBL" id="AK147138">
    <property type="protein sequence ID" value="BAE27708.1"/>
    <property type="molecule type" value="mRNA"/>
</dbReference>
<dbReference type="EMBL" id="AK169062">
    <property type="protein sequence ID" value="BAE40849.1"/>
    <property type="molecule type" value="mRNA"/>
</dbReference>
<dbReference type="EMBL" id="CH466521">
    <property type="protein sequence ID" value="EDK97535.1"/>
    <property type="molecule type" value="Genomic_DNA"/>
</dbReference>
<dbReference type="EMBL" id="BC006630">
    <property type="protein sequence ID" value="AAH06630.1"/>
    <property type="molecule type" value="mRNA"/>
</dbReference>
<dbReference type="CCDS" id="CCDS28028.1"/>
<dbReference type="RefSeq" id="NP_035802.3">
    <property type="nucleotide sequence ID" value="NM_011672.4"/>
</dbReference>
<dbReference type="RefSeq" id="XP_006522068.1">
    <property type="nucleotide sequence ID" value="XM_006522005.4"/>
</dbReference>
<dbReference type="SMR" id="P70362"/>
<dbReference type="BioGRID" id="204430">
    <property type="interactions" value="37"/>
</dbReference>
<dbReference type="ComplexPortal" id="CPX-136">
    <property type="entry name" value="Vcp-Npl4-Ufd1 AAA ATPase complex"/>
</dbReference>
<dbReference type="CORUM" id="P70362"/>
<dbReference type="DIP" id="DIP-60008N"/>
<dbReference type="FunCoup" id="P70362">
    <property type="interactions" value="3596"/>
</dbReference>
<dbReference type="IntAct" id="P70362">
    <property type="interactions" value="4"/>
</dbReference>
<dbReference type="MINT" id="P70362"/>
<dbReference type="STRING" id="10090.ENSMUSP00000111241"/>
<dbReference type="iPTMnet" id="P70362"/>
<dbReference type="PhosphoSitePlus" id="P70362"/>
<dbReference type="SwissPalm" id="P70362"/>
<dbReference type="REPRODUCTION-2DPAGE" id="P70362"/>
<dbReference type="CPTAC" id="non-CPTAC-3293"/>
<dbReference type="jPOST" id="P70362"/>
<dbReference type="PaxDb" id="10090-ENSMUSP00000111241"/>
<dbReference type="PeptideAtlas" id="P70362"/>
<dbReference type="ProteomicsDB" id="298469"/>
<dbReference type="Pumba" id="P70362"/>
<dbReference type="Antibodypedia" id="22930">
    <property type="antibodies" value="391 antibodies from 32 providers"/>
</dbReference>
<dbReference type="DNASU" id="22230"/>
<dbReference type="Ensembl" id="ENSMUST00000005394.13">
    <property type="protein sequence ID" value="ENSMUSP00000005394.7"/>
    <property type="gene ID" value="ENSMUSG00000005262.14"/>
</dbReference>
<dbReference type="Ensembl" id="ENSMUST00000115578.10">
    <property type="protein sequence ID" value="ENSMUSP00000111241.4"/>
    <property type="gene ID" value="ENSMUSG00000005262.14"/>
</dbReference>
<dbReference type="GeneID" id="22230"/>
<dbReference type="KEGG" id="mmu:22230"/>
<dbReference type="UCSC" id="uc007yon.2">
    <property type="organism name" value="mouse"/>
</dbReference>
<dbReference type="AGR" id="MGI:109353"/>
<dbReference type="CTD" id="7353"/>
<dbReference type="MGI" id="MGI:109353">
    <property type="gene designation" value="Ufd1"/>
</dbReference>
<dbReference type="VEuPathDB" id="HostDB:ENSMUSG00000005262"/>
<dbReference type="eggNOG" id="KOG1816">
    <property type="taxonomic scope" value="Eukaryota"/>
</dbReference>
<dbReference type="GeneTree" id="ENSGT00390000002408"/>
<dbReference type="HOGENOM" id="CLU_037790_2_0_1"/>
<dbReference type="InParanoid" id="P70362"/>
<dbReference type="OMA" id="WMMQQLC"/>
<dbReference type="OrthoDB" id="422728at2759"/>
<dbReference type="PhylomeDB" id="P70362"/>
<dbReference type="TreeFam" id="TF314581"/>
<dbReference type="Reactome" id="R-MMU-110320">
    <property type="pathway name" value="Translesion Synthesis by POLH"/>
</dbReference>
<dbReference type="Reactome" id="R-MMU-5689880">
    <property type="pathway name" value="Ub-specific processing proteases"/>
</dbReference>
<dbReference type="Reactome" id="R-MMU-8951664">
    <property type="pathway name" value="Neddylation"/>
</dbReference>
<dbReference type="Reactome" id="R-MMU-9755511">
    <property type="pathway name" value="KEAP1-NFE2L2 pathway"/>
</dbReference>
<dbReference type="UniPathway" id="UPA00144"/>
<dbReference type="BioGRID-ORCS" id="22230">
    <property type="hits" value="25 hits in 76 CRISPR screens"/>
</dbReference>
<dbReference type="PRO" id="PR:P70362"/>
<dbReference type="Proteomes" id="UP000000589">
    <property type="component" value="Chromosome 16"/>
</dbReference>
<dbReference type="RNAct" id="P70362">
    <property type="molecule type" value="protein"/>
</dbReference>
<dbReference type="Bgee" id="ENSMUSG00000005262">
    <property type="expression patterns" value="Expressed in dorsomedial nucleus of hypothalamus and 265 other cell types or tissues"/>
</dbReference>
<dbReference type="ExpressionAtlas" id="P70362">
    <property type="expression patterns" value="baseline and differential"/>
</dbReference>
<dbReference type="GO" id="GO:0005737">
    <property type="term" value="C:cytoplasm"/>
    <property type="evidence" value="ECO:0000314"/>
    <property type="project" value="MGI"/>
</dbReference>
<dbReference type="GO" id="GO:0005829">
    <property type="term" value="C:cytosol"/>
    <property type="evidence" value="ECO:0007669"/>
    <property type="project" value="UniProtKB-SubCell"/>
</dbReference>
<dbReference type="GO" id="GO:0005634">
    <property type="term" value="C:nucleus"/>
    <property type="evidence" value="ECO:0007669"/>
    <property type="project" value="UniProtKB-SubCell"/>
</dbReference>
<dbReference type="GO" id="GO:0036501">
    <property type="term" value="C:UFD1-NPL4 complex"/>
    <property type="evidence" value="ECO:0000314"/>
    <property type="project" value="ParkinsonsUK-UCL"/>
</dbReference>
<dbReference type="GO" id="GO:0034098">
    <property type="term" value="C:VCP-NPL4-UFD1 AAA ATPase complex"/>
    <property type="evidence" value="ECO:0000314"/>
    <property type="project" value="ParkinsonsUK-UCL"/>
</dbReference>
<dbReference type="GO" id="GO:0036435">
    <property type="term" value="F:K48-linked polyubiquitin modification-dependent protein binding"/>
    <property type="evidence" value="ECO:0000314"/>
    <property type="project" value="ParkinsonsUK-UCL"/>
</dbReference>
<dbReference type="GO" id="GO:0071218">
    <property type="term" value="P:cellular response to misfolded protein"/>
    <property type="evidence" value="ECO:0007669"/>
    <property type="project" value="Ensembl"/>
</dbReference>
<dbReference type="GO" id="GO:0036503">
    <property type="term" value="P:ERAD pathway"/>
    <property type="evidence" value="ECO:0000269"/>
    <property type="project" value="ComplexPortal"/>
</dbReference>
<dbReference type="GO" id="GO:0039536">
    <property type="term" value="P:negative regulation of RIG-I signaling pathway"/>
    <property type="evidence" value="ECO:0000250"/>
    <property type="project" value="UniProtKB"/>
</dbReference>
<dbReference type="GO" id="GO:0032480">
    <property type="term" value="P:negative regulation of type I interferon production"/>
    <property type="evidence" value="ECO:0000250"/>
    <property type="project" value="UniProtKB"/>
</dbReference>
<dbReference type="GO" id="GO:0043161">
    <property type="term" value="P:proteasome-mediated ubiquitin-dependent protein catabolic process"/>
    <property type="evidence" value="ECO:0007669"/>
    <property type="project" value="UniProtKB-UniPathway"/>
</dbReference>
<dbReference type="GO" id="GO:0030970">
    <property type="term" value="P:retrograde protein transport, ER to cytosol"/>
    <property type="evidence" value="ECO:0000269"/>
    <property type="project" value="ComplexPortal"/>
</dbReference>
<dbReference type="GO" id="GO:0006511">
    <property type="term" value="P:ubiquitin-dependent protein catabolic process"/>
    <property type="evidence" value="ECO:0000250"/>
    <property type="project" value="UniProtKB"/>
</dbReference>
<dbReference type="FunFam" id="2.40.40.50:FF:000001">
    <property type="entry name" value="Ubiquitin fusion degradation protein 1 homolog"/>
    <property type="match status" value="1"/>
</dbReference>
<dbReference type="FunFam" id="3.10.330.10:FF:000002">
    <property type="entry name" value="ubiquitin fusion degradation protein 1 homolog"/>
    <property type="match status" value="1"/>
</dbReference>
<dbReference type="Gene3D" id="3.10.330.10">
    <property type="match status" value="1"/>
</dbReference>
<dbReference type="Gene3D" id="2.40.40.50">
    <property type="entry name" value="Ubiquitin fusion degradation protein UFD1, N-terminal domain"/>
    <property type="match status" value="1"/>
</dbReference>
<dbReference type="InterPro" id="IPR004854">
    <property type="entry name" value="Ufd1-like"/>
</dbReference>
<dbReference type="InterPro" id="IPR042299">
    <property type="entry name" value="Ufd1-like_Nn"/>
</dbReference>
<dbReference type="InterPro" id="IPR055417">
    <property type="entry name" value="UFD1_N1"/>
</dbReference>
<dbReference type="InterPro" id="IPR055418">
    <property type="entry name" value="UFD1_N2"/>
</dbReference>
<dbReference type="PANTHER" id="PTHR12555">
    <property type="entry name" value="UBIQUITIN FUSION DEGRADATON PROTEIN 1"/>
    <property type="match status" value="1"/>
</dbReference>
<dbReference type="PANTHER" id="PTHR12555:SF13">
    <property type="entry name" value="UBIQUITIN RECOGNITION FACTOR IN ER-ASSOCIATED DEGRADATION PROTEIN 1"/>
    <property type="match status" value="1"/>
</dbReference>
<dbReference type="Pfam" id="PF03152">
    <property type="entry name" value="UFD1_N1"/>
    <property type="match status" value="1"/>
</dbReference>
<dbReference type="Pfam" id="PF24842">
    <property type="entry name" value="UFD1_N2"/>
    <property type="match status" value="1"/>
</dbReference>
<sequence>MFSFNMFDHPIPRVFQNRFSTQYRCFSVSMLAGPNDRSDVEKGGKIIMPPSALDQLSRLNITYPMLFKLTNKNSDRMTHCGVLEFVADEGICYLPHWMMQNLLLEEGGLVQVESVNLQVATYSKFQPQSPDFLDITNPKAVLENALRNFACLTTGDVIAINYNEKIYELRVMETKPDKAVSIIECDMNVDFDAPLGYKEPERPVQHEESIEGEADHSGYAGEVGFRAFSGSGNRLDGKKKGVEPSPSPIKPGDIKRGIPNYEFKLGKITFIRNSRPLVKKVEEDEAGGRFIAFSGEGQSLRKKGRKP</sequence>
<organism>
    <name type="scientific">Mus musculus</name>
    <name type="common">Mouse</name>
    <dbReference type="NCBI Taxonomy" id="10090"/>
    <lineage>
        <taxon>Eukaryota</taxon>
        <taxon>Metazoa</taxon>
        <taxon>Chordata</taxon>
        <taxon>Craniata</taxon>
        <taxon>Vertebrata</taxon>
        <taxon>Euteleostomi</taxon>
        <taxon>Mammalia</taxon>
        <taxon>Eutheria</taxon>
        <taxon>Euarchontoglires</taxon>
        <taxon>Glires</taxon>
        <taxon>Rodentia</taxon>
        <taxon>Myomorpha</taxon>
        <taxon>Muroidea</taxon>
        <taxon>Muridae</taxon>
        <taxon>Murinae</taxon>
        <taxon>Mus</taxon>
        <taxon>Mus</taxon>
    </lineage>
</organism>
<keyword id="KW-0007">Acetylation</keyword>
<keyword id="KW-0963">Cytoplasm</keyword>
<keyword id="KW-0539">Nucleus</keyword>
<keyword id="KW-0597">Phosphoprotein</keyword>
<keyword id="KW-1185">Reference proteome</keyword>
<keyword id="KW-0833">Ubl conjugation pathway</keyword>
<accession>P70362</accession>
<accession>Q923C4</accession>
<comment type="function">
    <text evidence="1 2">Essential component of the ubiquitin-dependent proteolytic pathway which degrades ubiquitin fusion proteins. The ternary complex containing UFD1, VCP and NPLOC4 binds ubiquitinated proteins and is necessary for the export of misfolded proteins from the ER to the cytoplasm, where they are degraded by the proteasome. The NPLOC4-UFD1-VCP complex regulates spindle disassembly at the end of mitosis and is necessary for the formation of a closed nuclear envelope. It may be involved in the development of some ectoderm-derived structures (By similarity). Acts as a negative regulator of type I interferon production via the complex formed with VCP and NPLOC4, which binds to RIGI and recruits RNF125 to promote ubiquitination and degradation of RIGI (By similarity).</text>
</comment>
<comment type="pathway">
    <text evidence="2">Protein degradation; proteasomal ubiquitin-dependent pathway.</text>
</comment>
<comment type="subunit">
    <text evidence="1 4">Heterodimer with NPLOC4, this heterodimer binds VCP and inhibits Golgi membrane fusion. Interacts with USP13 (By similarity). Interacts with ZFAND2B; probably through VCP (PubMed:24160817).</text>
</comment>
<comment type="interaction">
    <interactant intactId="EBI-7961331">
        <id>P70362</id>
    </interactant>
    <interactant intactId="EBI-80597">
        <id>Q01853</id>
        <label>Vcp</label>
    </interactant>
    <organismsDiffer>false</organismsDiffer>
    <experiments>9</experiments>
</comment>
<comment type="interaction">
    <interactant intactId="EBI-7961331">
        <id>P70362</id>
    </interactant>
    <interactant intactId="EBI-1993990">
        <id>Q9ES54</id>
        <label>Nploc4</label>
    </interactant>
    <organismsDiffer>true</organismsDiffer>
    <experiments>18</experiments>
</comment>
<comment type="subcellular location">
    <subcellularLocation>
        <location evidence="2">Nucleus</location>
    </subcellularLocation>
    <subcellularLocation>
        <location evidence="2">Cytoplasm</location>
        <location evidence="2">Cytosol</location>
    </subcellularLocation>
</comment>
<comment type="developmental stage">
    <text>Expressed at high levels in the otocyst (between 9.5 dpc and 11.5 dpc embryos fading away after 12 dpc) and in the developing eye. Lower expression is found in different sites of the embryos such as developing brain, the lungs and the cardiac outflow tract.</text>
</comment>
<comment type="similarity">
    <text evidence="5">Belongs to the UFD1 family.</text>
</comment>
<protein>
    <recommendedName>
        <fullName>Ubiquitin recognition factor in ER-associated degradation protein 1</fullName>
    </recommendedName>
    <alternativeName>
        <fullName>Ubiquitin fusion degradation protein 1 homolog</fullName>
        <shortName>UB fusion protein 1</shortName>
    </alternativeName>
</protein>
<name>UFD1_MOUSE</name>
<gene>
    <name evidence="6" type="primary">Ufd1</name>
    <name type="synonym">Ufd1l</name>
</gene>
<proteinExistence type="evidence at protein level"/>
<evidence type="ECO:0000250" key="1">
    <source>
        <dbReference type="UniProtKB" id="Q92890"/>
    </source>
</evidence>
<evidence type="ECO:0000250" key="2">
    <source>
        <dbReference type="UniProtKB" id="Q9ES53"/>
    </source>
</evidence>
<evidence type="ECO:0000256" key="3">
    <source>
        <dbReference type="SAM" id="MobiDB-lite"/>
    </source>
</evidence>
<evidence type="ECO:0000269" key="4">
    <source>
    </source>
</evidence>
<evidence type="ECO:0000305" key="5"/>
<evidence type="ECO:0000312" key="6">
    <source>
        <dbReference type="MGI" id="MGI:109353"/>
    </source>
</evidence>
<evidence type="ECO:0007744" key="7">
    <source>
    </source>
</evidence>
<evidence type="ECO:0007744" key="8">
    <source>
    </source>
</evidence>